<dbReference type="EC" id="2.4.-.-"/>
<dbReference type="EMBL" id="AJ235271">
    <property type="protein sequence ID" value="CAA14799.1"/>
    <property type="molecule type" value="Genomic_DNA"/>
</dbReference>
<dbReference type="PIR" id="E71690">
    <property type="entry name" value="E71690"/>
</dbReference>
<dbReference type="RefSeq" id="NP_220722.1">
    <property type="nucleotide sequence ID" value="NC_000963.1"/>
</dbReference>
<dbReference type="RefSeq" id="WP_004599412.1">
    <property type="nucleotide sequence ID" value="NC_000963.1"/>
</dbReference>
<dbReference type="SMR" id="Q9ZDI9"/>
<dbReference type="STRING" id="272947.gene:17555419"/>
<dbReference type="CAZy" id="GT2">
    <property type="family name" value="Glycosyltransferase Family 2"/>
</dbReference>
<dbReference type="EnsemblBacteria" id="CAA14799">
    <property type="protein sequence ID" value="CAA14799"/>
    <property type="gene ID" value="CAA14799"/>
</dbReference>
<dbReference type="KEGG" id="rpr:RP339"/>
<dbReference type="PATRIC" id="fig|272947.5.peg.349"/>
<dbReference type="eggNOG" id="COG1216">
    <property type="taxonomic scope" value="Bacteria"/>
</dbReference>
<dbReference type="HOGENOM" id="CLU_025996_0_0_5"/>
<dbReference type="OrthoDB" id="6383742at2"/>
<dbReference type="Proteomes" id="UP000002480">
    <property type="component" value="Chromosome"/>
</dbReference>
<dbReference type="GO" id="GO:0016758">
    <property type="term" value="F:hexosyltransferase activity"/>
    <property type="evidence" value="ECO:0007669"/>
    <property type="project" value="UniProtKB-ARBA"/>
</dbReference>
<dbReference type="GO" id="GO:0009058">
    <property type="term" value="P:biosynthetic process"/>
    <property type="evidence" value="ECO:0007669"/>
    <property type="project" value="UniProtKB-ARBA"/>
</dbReference>
<dbReference type="Gene3D" id="3.90.550.10">
    <property type="entry name" value="Spore Coat Polysaccharide Biosynthesis Protein SpsA, Chain A"/>
    <property type="match status" value="1"/>
</dbReference>
<dbReference type="InterPro" id="IPR001173">
    <property type="entry name" value="Glyco_trans_2-like"/>
</dbReference>
<dbReference type="InterPro" id="IPR029044">
    <property type="entry name" value="Nucleotide-diphossugar_trans"/>
</dbReference>
<dbReference type="PANTHER" id="PTHR22916">
    <property type="entry name" value="GLYCOSYLTRANSFERASE"/>
    <property type="match status" value="1"/>
</dbReference>
<dbReference type="PANTHER" id="PTHR22916:SF3">
    <property type="entry name" value="UDP-GLCNAC:BETAGAL BETA-1,3-N-ACETYLGLUCOSAMINYLTRANSFERASE-LIKE PROTEIN 1"/>
    <property type="match status" value="1"/>
</dbReference>
<dbReference type="Pfam" id="PF00535">
    <property type="entry name" value="Glycos_transf_2"/>
    <property type="match status" value="1"/>
</dbReference>
<dbReference type="SUPFAM" id="SSF53448">
    <property type="entry name" value="Nucleotide-diphospho-sugar transferases"/>
    <property type="match status" value="1"/>
</dbReference>
<name>Y339_RICPR</name>
<feature type="chain" id="PRO_0000268854" description="Uncharacterized glycosyltransferase RP339">
    <location>
        <begin position="1"/>
        <end position="318"/>
    </location>
</feature>
<proteinExistence type="inferred from homology"/>
<evidence type="ECO:0000305" key="1"/>
<sequence>MKQNIYSPLVSIIIPVYNGANYMREAIDSALAQTYKNIEIIVVNDGSKDETETIALSYGDKICYLYKENGGCGSALNCGIKNMKGKYFSWLSHDDVYYPNKIEHQINILNKLDNKDVIVYCGYELIDQKSHSLYCVKPDQRYSKEKLDISLFPLLHSLIHGCTLLIPSILFQKIGLFDESLKYTHDYDLWFKFFRVSSIYFDHEVLIKSRIHAAQTTNTALNQLEEYEDLWSGFLKKLTKEEMIMIKGSTHQFLSDIAVFLKKNGYIKSYQLALAMTDQKIIGGFYTSIITEIIYSLRRHGINTTITKIYKWIRKSRK</sequence>
<organism>
    <name type="scientific">Rickettsia prowazekii (strain Madrid E)</name>
    <dbReference type="NCBI Taxonomy" id="272947"/>
    <lineage>
        <taxon>Bacteria</taxon>
        <taxon>Pseudomonadati</taxon>
        <taxon>Pseudomonadota</taxon>
        <taxon>Alphaproteobacteria</taxon>
        <taxon>Rickettsiales</taxon>
        <taxon>Rickettsiaceae</taxon>
        <taxon>Rickettsieae</taxon>
        <taxon>Rickettsia</taxon>
        <taxon>typhus group</taxon>
    </lineage>
</organism>
<comment type="similarity">
    <text evidence="1">Belongs to the glycosyltransferase 2 family.</text>
</comment>
<protein>
    <recommendedName>
        <fullName>Uncharacterized glycosyltransferase RP339</fullName>
        <ecNumber>2.4.-.-</ecNumber>
    </recommendedName>
</protein>
<accession>Q9ZDI9</accession>
<gene>
    <name type="ordered locus">RP339</name>
</gene>
<reference key="1">
    <citation type="journal article" date="1998" name="Nature">
        <title>The genome sequence of Rickettsia prowazekii and the origin of mitochondria.</title>
        <authorList>
            <person name="Andersson S.G.E."/>
            <person name="Zomorodipour A."/>
            <person name="Andersson J.O."/>
            <person name="Sicheritz-Ponten T."/>
            <person name="Alsmark U.C.M."/>
            <person name="Podowski R.M."/>
            <person name="Naeslund A.K."/>
            <person name="Eriksson A.-S."/>
            <person name="Winkler H.H."/>
            <person name="Kurland C.G."/>
        </authorList>
    </citation>
    <scope>NUCLEOTIDE SEQUENCE [LARGE SCALE GENOMIC DNA]</scope>
    <source>
        <strain>Madrid E</strain>
    </source>
</reference>
<keyword id="KW-0328">Glycosyltransferase</keyword>
<keyword id="KW-1185">Reference proteome</keyword>
<keyword id="KW-0808">Transferase</keyword>